<organism>
    <name type="scientific">Mycobacterium tuberculosis (strain ATCC 25618 / H37Rv)</name>
    <dbReference type="NCBI Taxonomy" id="83332"/>
    <lineage>
        <taxon>Bacteria</taxon>
        <taxon>Bacillati</taxon>
        <taxon>Actinomycetota</taxon>
        <taxon>Actinomycetes</taxon>
        <taxon>Mycobacteriales</taxon>
        <taxon>Mycobacteriaceae</taxon>
        <taxon>Mycobacterium</taxon>
        <taxon>Mycobacterium tuberculosis complex</taxon>
    </lineage>
</organism>
<accession>P9WL35</accession>
<accession>L0TDN5</accession>
<accession>P65045</accession>
<accession>Q10831</accession>
<reference key="1">
    <citation type="journal article" date="1998" name="Nature">
        <title>Deciphering the biology of Mycobacterium tuberculosis from the complete genome sequence.</title>
        <authorList>
            <person name="Cole S.T."/>
            <person name="Brosch R."/>
            <person name="Parkhill J."/>
            <person name="Garnier T."/>
            <person name="Churcher C.M."/>
            <person name="Harris D.E."/>
            <person name="Gordon S.V."/>
            <person name="Eiglmeier K."/>
            <person name="Gas S."/>
            <person name="Barry C.E. III"/>
            <person name="Tekaia F."/>
            <person name="Badcock K."/>
            <person name="Basham D."/>
            <person name="Brown D."/>
            <person name="Chillingworth T."/>
            <person name="Connor R."/>
            <person name="Davies R.M."/>
            <person name="Devlin K."/>
            <person name="Feltwell T."/>
            <person name="Gentles S."/>
            <person name="Hamlin N."/>
            <person name="Holroyd S."/>
            <person name="Hornsby T."/>
            <person name="Jagels K."/>
            <person name="Krogh A."/>
            <person name="McLean J."/>
            <person name="Moule S."/>
            <person name="Murphy L.D."/>
            <person name="Oliver S."/>
            <person name="Osborne J."/>
            <person name="Quail M.A."/>
            <person name="Rajandream M.A."/>
            <person name="Rogers J."/>
            <person name="Rutter S."/>
            <person name="Seeger K."/>
            <person name="Skelton S."/>
            <person name="Squares S."/>
            <person name="Squares R."/>
            <person name="Sulston J.E."/>
            <person name="Taylor K."/>
            <person name="Whitehead S."/>
            <person name="Barrell B.G."/>
        </authorList>
    </citation>
    <scope>NUCLEOTIDE SEQUENCE [LARGE SCALE GENOMIC DNA]</scope>
    <source>
        <strain>ATCC 25618 / H37Rv</strain>
    </source>
</reference>
<reference key="2">
    <citation type="journal article" date="2011" name="Mol. Cell. Proteomics">
        <title>Proteogenomic analysis of Mycobacterium tuberculosis by high resolution mass spectrometry.</title>
        <authorList>
            <person name="Kelkar D.S."/>
            <person name="Kumar D."/>
            <person name="Kumar P."/>
            <person name="Balakrishnan L."/>
            <person name="Muthusamy B."/>
            <person name="Yadav A.K."/>
            <person name="Shrivastava P."/>
            <person name="Marimuthu A."/>
            <person name="Anand S."/>
            <person name="Sundaram H."/>
            <person name="Kingsbury R."/>
            <person name="Harsha H.C."/>
            <person name="Nair B."/>
            <person name="Prasad T.S."/>
            <person name="Chauhan D.S."/>
            <person name="Katoch K."/>
            <person name="Katoch V.M."/>
            <person name="Kumar P."/>
            <person name="Chaerkady R."/>
            <person name="Ramachandran S."/>
            <person name="Dash D."/>
            <person name="Pandey A."/>
        </authorList>
    </citation>
    <scope>IDENTIFICATION BY MASS SPECTROMETRY [LARGE SCALE ANALYSIS]</scope>
    <source>
        <strain>ATCC 25618 / H37Rv</strain>
    </source>
</reference>
<evidence type="ECO:0000255" key="1">
    <source>
        <dbReference type="PROSITE-ProRule" id="PRU01072"/>
    </source>
</evidence>
<protein>
    <recommendedName>
        <fullName>Uncharacterized protein Rv2886c</fullName>
    </recommendedName>
</protein>
<dbReference type="EMBL" id="AL123456">
    <property type="protein sequence ID" value="CCP45688.1"/>
    <property type="molecule type" value="Genomic_DNA"/>
</dbReference>
<dbReference type="PIR" id="A70925">
    <property type="entry name" value="A70925"/>
</dbReference>
<dbReference type="RefSeq" id="NP_217402.1">
    <property type="nucleotide sequence ID" value="NC_000962.3"/>
</dbReference>
<dbReference type="RefSeq" id="WP_003899526.1">
    <property type="nucleotide sequence ID" value="NC_000962.3"/>
</dbReference>
<dbReference type="SMR" id="P9WL35"/>
<dbReference type="STRING" id="83332.Rv2886c"/>
<dbReference type="PaxDb" id="83332-Rv2886c"/>
<dbReference type="DNASU" id="887424"/>
<dbReference type="GeneID" id="887424"/>
<dbReference type="KEGG" id="mtu:Rv2886c"/>
<dbReference type="KEGG" id="mtv:RVBD_2886c"/>
<dbReference type="PATRIC" id="fig|83332.111.peg.3212"/>
<dbReference type="TubercuList" id="Rv2886c"/>
<dbReference type="eggNOG" id="COG2452">
    <property type="taxonomic scope" value="Bacteria"/>
</dbReference>
<dbReference type="InParanoid" id="P9WL35"/>
<dbReference type="OrthoDB" id="9814833at2"/>
<dbReference type="PhylomeDB" id="P9WL35"/>
<dbReference type="Proteomes" id="UP000001584">
    <property type="component" value="Chromosome"/>
</dbReference>
<dbReference type="GO" id="GO:0005829">
    <property type="term" value="C:cytosol"/>
    <property type="evidence" value="ECO:0007005"/>
    <property type="project" value="MTBBASE"/>
</dbReference>
<dbReference type="GO" id="GO:0005886">
    <property type="term" value="C:plasma membrane"/>
    <property type="evidence" value="ECO:0007005"/>
    <property type="project" value="MTBBASE"/>
</dbReference>
<dbReference type="GO" id="GO:0003677">
    <property type="term" value="F:DNA binding"/>
    <property type="evidence" value="ECO:0007669"/>
    <property type="project" value="InterPro"/>
</dbReference>
<dbReference type="GO" id="GO:0000150">
    <property type="term" value="F:DNA strand exchange activity"/>
    <property type="evidence" value="ECO:0007669"/>
    <property type="project" value="InterPro"/>
</dbReference>
<dbReference type="FunFam" id="3.40.50.1390:FF:000002">
    <property type="entry name" value="ORF1 in transposon ISC1904"/>
    <property type="match status" value="1"/>
</dbReference>
<dbReference type="Gene3D" id="3.40.50.1390">
    <property type="entry name" value="Resolvase, N-terminal catalytic domain"/>
    <property type="match status" value="1"/>
</dbReference>
<dbReference type="InterPro" id="IPR051491">
    <property type="entry name" value="Recombinase/Transposase-rel"/>
</dbReference>
<dbReference type="InterPro" id="IPR006119">
    <property type="entry name" value="Resolv_N"/>
</dbReference>
<dbReference type="InterPro" id="IPR036162">
    <property type="entry name" value="Resolvase-like_N_sf"/>
</dbReference>
<dbReference type="InterPro" id="IPR048046">
    <property type="entry name" value="Transpos_IS607"/>
</dbReference>
<dbReference type="NCBIfam" id="NF033518">
    <property type="entry name" value="transpos_IS607"/>
    <property type="match status" value="1"/>
</dbReference>
<dbReference type="PANTHER" id="PTHR36172">
    <property type="match status" value="1"/>
</dbReference>
<dbReference type="PANTHER" id="PTHR36172:SF1">
    <property type="entry name" value="RESOLVASE-RELATED"/>
    <property type="match status" value="1"/>
</dbReference>
<dbReference type="Pfam" id="PF00239">
    <property type="entry name" value="Resolvase"/>
    <property type="match status" value="1"/>
</dbReference>
<dbReference type="SMART" id="SM00857">
    <property type="entry name" value="Resolvase"/>
    <property type="match status" value="1"/>
</dbReference>
<dbReference type="SUPFAM" id="SSF53041">
    <property type="entry name" value="Resolvase-like"/>
    <property type="match status" value="1"/>
</dbReference>
<dbReference type="PROSITE" id="PS51736">
    <property type="entry name" value="RECOMBINASES_3"/>
    <property type="match status" value="1"/>
</dbReference>
<proteinExistence type="evidence at protein level"/>
<name>Y2886_MYCTU</name>
<keyword id="KW-1185">Reference proteome</keyword>
<sequence length="295" mass="31860">MSRILTHVPGRTVNRSYALPALVGSAAGRLSGNHSHGREAYIALPQWACSRQPSTPPLQTPGRINALWSLRPVLPMPGRGCQLLRLGGRWLSVVCCRNGSMNLVVWAEGNGVARVIAYRWLRVGRLPVPARRVGRVILVDEPAGQPGRWGRTAVCARLSSADQKVDLDRQVVGVTAWATAEQIPVGKVVTEVGSALYGRRRTFLTLLGDPTVRRIVMKRRDRLGRFGFECVQAVLAADGRELVVVDSADVDDDVVGDITEILTSICARLYGKRAAGNRAARAVAAAARAGGHEAR</sequence>
<gene>
    <name type="ordered locus">Rv2886c</name>
    <name type="ORF">MTCY274.17c</name>
</gene>
<feature type="chain" id="PRO_0000104091" description="Uncharacterized protein Rv2886c">
    <location>
        <begin position="1"/>
        <end position="295"/>
    </location>
</feature>
<feature type="domain" description="Resolvase/invertase-type recombinase catalytic" evidence="1">
    <location>
        <begin position="151"/>
        <end position="290"/>
    </location>
</feature>
<feature type="active site" description="O-(5'-phospho-DNA)-serine intermediate" evidence="1">
    <location>
        <position position="159"/>
    </location>
</feature>